<dbReference type="EMBL" id="AJ271079">
    <property type="protein sequence ID" value="CAB67143.2"/>
    <property type="molecule type" value="Genomic_DNA"/>
</dbReference>
<dbReference type="RefSeq" id="NP_084678.2">
    <property type="nucleotide sequence ID" value="NC_002693.2"/>
</dbReference>
<dbReference type="SMR" id="Q9MTN2"/>
<dbReference type="GeneID" id="802809"/>
<dbReference type="GO" id="GO:0009535">
    <property type="term" value="C:chloroplast thylakoid membrane"/>
    <property type="evidence" value="ECO:0007669"/>
    <property type="project" value="UniProtKB-SubCell"/>
</dbReference>
<dbReference type="GO" id="GO:0009523">
    <property type="term" value="C:photosystem II"/>
    <property type="evidence" value="ECO:0007669"/>
    <property type="project" value="UniProtKB-KW"/>
</dbReference>
<dbReference type="GO" id="GO:0016168">
    <property type="term" value="F:chlorophyll binding"/>
    <property type="evidence" value="ECO:0007669"/>
    <property type="project" value="UniProtKB-UniRule"/>
</dbReference>
<dbReference type="GO" id="GO:0045156">
    <property type="term" value="F:electron transporter, transferring electrons within the cyclic electron transport pathway of photosynthesis activity"/>
    <property type="evidence" value="ECO:0007669"/>
    <property type="project" value="InterPro"/>
</dbReference>
<dbReference type="GO" id="GO:0046872">
    <property type="term" value="F:metal ion binding"/>
    <property type="evidence" value="ECO:0007669"/>
    <property type="project" value="UniProtKB-KW"/>
</dbReference>
<dbReference type="GO" id="GO:0009772">
    <property type="term" value="P:photosynthetic electron transport in photosystem II"/>
    <property type="evidence" value="ECO:0007669"/>
    <property type="project" value="InterPro"/>
</dbReference>
<dbReference type="FunFam" id="1.10.10.670:FF:000001">
    <property type="entry name" value="Photosystem II CP43 reaction center protein"/>
    <property type="match status" value="1"/>
</dbReference>
<dbReference type="Gene3D" id="1.10.10.670">
    <property type="entry name" value="photosystem ii from thermosynechococcus elongatus"/>
    <property type="match status" value="1"/>
</dbReference>
<dbReference type="HAMAP" id="MF_01496">
    <property type="entry name" value="PSII_PsbC_CP43"/>
    <property type="match status" value="1"/>
</dbReference>
<dbReference type="InterPro" id="IPR000932">
    <property type="entry name" value="PS_antenna-like"/>
</dbReference>
<dbReference type="InterPro" id="IPR036001">
    <property type="entry name" value="PS_II_antenna-like_sf"/>
</dbReference>
<dbReference type="InterPro" id="IPR005869">
    <property type="entry name" value="PSII_PsbC"/>
</dbReference>
<dbReference type="InterPro" id="IPR044900">
    <property type="entry name" value="PSII_PsbC_sf"/>
</dbReference>
<dbReference type="NCBIfam" id="TIGR01153">
    <property type="entry name" value="psbC"/>
    <property type="match status" value="1"/>
</dbReference>
<dbReference type="Pfam" id="PF00421">
    <property type="entry name" value="PSII"/>
    <property type="match status" value="1"/>
</dbReference>
<dbReference type="SUPFAM" id="SSF161077">
    <property type="entry name" value="Photosystem II antenna protein-like"/>
    <property type="match status" value="1"/>
</dbReference>
<proteinExistence type="inferred from homology"/>
<name>PSBC_OENEH</name>
<comment type="function">
    <text evidence="1">One of the components of the core complex of photosystem II (PSII). It binds chlorophyll and helps catalyze the primary light-induced photochemical processes of PSII. PSII is a light-driven water:plastoquinone oxidoreductase, using light energy to abstract electrons from H(2)O, generating O(2) and a proton gradient subsequently used for ATP formation.</text>
</comment>
<comment type="cofactor">
    <text evidence="1">Binds multiple chlorophylls and provides some of the ligands for the Ca-4Mn-5O cluster of the oxygen-evolving complex. It may also provide a ligand for a Cl- that is required for oxygen evolution. PSII binds additional chlorophylls, carotenoids and specific lipids.</text>
</comment>
<comment type="subunit">
    <text evidence="1">PSII is composed of 1 copy each of membrane proteins PsbA, PsbB, PsbC, PsbD, PsbE, PsbF, PsbH, PsbI, PsbJ, PsbK, PsbL, PsbM, PsbT, PsbX, PsbY, PsbZ, Psb30/Ycf12, at least 3 peripheral proteins of the oxygen-evolving complex and a large number of cofactors. It forms dimeric complexes.</text>
</comment>
<comment type="subcellular location">
    <subcellularLocation>
        <location evidence="1">Plastid</location>
        <location evidence="1">Chloroplast thylakoid membrane</location>
        <topology evidence="1">Multi-pass membrane protein</topology>
    </subcellularLocation>
</comment>
<comment type="similarity">
    <text evidence="1">Belongs to the PsbB/PsbC family. PsbC subfamily.</text>
</comment>
<gene>
    <name evidence="1" type="primary">psbC</name>
</gene>
<reference key="1">
    <citation type="journal article" date="2000" name="Mol. Gen. Genet.">
        <title>Complete nucleotide sequence of the Oenothera elata plastid chromosome, representing plastome I of the five distinguishable Euoenothera plastomes.</title>
        <authorList>
            <person name="Hupfer H."/>
            <person name="Swiatek M."/>
            <person name="Hornung S."/>
            <person name="Herrmann R.G."/>
            <person name="Maier R.M."/>
            <person name="Chiu W.-L."/>
            <person name="Sears B."/>
        </authorList>
    </citation>
    <scope>NUCLEOTIDE SEQUENCE [LARGE SCALE GENOMIC DNA]</scope>
    <source>
        <strain>cv. Johansen</strain>
    </source>
</reference>
<reference key="2">
    <citation type="journal article" date="2008" name="Nucleic Acids Res.">
        <title>The complete nucleotide sequences of the five genetically distinct plastid genomes of Oenothera, subsection Oenothera: I. Sequence evaluation and plastome evolution.</title>
        <authorList>
            <person name="Greiner S."/>
            <person name="Wang X."/>
            <person name="Rauwolf U."/>
            <person name="Silber M.V."/>
            <person name="Mayer K."/>
            <person name="Meurer J."/>
            <person name="Haberer G."/>
            <person name="Herrmann R.G."/>
        </authorList>
    </citation>
    <scope>NUCLEOTIDE SEQUENCE [LARGE SCALE GENOMIC DNA]</scope>
    <source>
        <strain>cv. Johansen</strain>
    </source>
</reference>
<sequence>MKTLYSLRRFYPVETLFNGTLALAGRDQETTGFAWWAGNARLINLSGKLLGAHVAHAGLIVFWAGAMNLFEVAHFVPEKPMYEQGLILLPHLATLGWGVGPGGEVIDTFPYFVSGVLHLISSAVLGFGGIYHALLGPETLEESFPFFGYVWKDRNKMTTILGIHLILLGLGAFLLVFKALYFGGVYDTWAPGGGDVRKITNLTLSPSILFGYLLKSPFGGEGWIVSVDDLEDIIGGHVWLGSICILGGIWHILTKPFAWARRALVWSGEAYLSYSLAALSVFGFIACCFVWFNNTAYPSEFYGPTGPEASQAQAFTFLVRDQRLGANVGSAQGPTGLGKYLMRSPTGEVIFGGETMRFWDLRAPWLEPLRGPNGLDLSRLKKDIQPWQERRSAEYMTHAPLGSLNSVGGVATEINAVNYVSPRSWLATSHFVLGFFLFVGHLWHAGRARAAAAGFEKGIDRDFEPALSMTPLN</sequence>
<accession>Q9MTN2</accession>
<organism>
    <name type="scientific">Oenothera elata subsp. hookeri</name>
    <name type="common">Hooker's evening primrose</name>
    <name type="synonym">Oenothera hookeri</name>
    <dbReference type="NCBI Taxonomy" id="85636"/>
    <lineage>
        <taxon>Eukaryota</taxon>
        <taxon>Viridiplantae</taxon>
        <taxon>Streptophyta</taxon>
        <taxon>Embryophyta</taxon>
        <taxon>Tracheophyta</taxon>
        <taxon>Spermatophyta</taxon>
        <taxon>Magnoliopsida</taxon>
        <taxon>eudicotyledons</taxon>
        <taxon>Gunneridae</taxon>
        <taxon>Pentapetalae</taxon>
        <taxon>rosids</taxon>
        <taxon>malvids</taxon>
        <taxon>Myrtales</taxon>
        <taxon>Onagraceae</taxon>
        <taxon>Onagroideae</taxon>
        <taxon>Onagreae</taxon>
        <taxon>Oenothera</taxon>
    </lineage>
</organism>
<keyword id="KW-0007">Acetylation</keyword>
<keyword id="KW-0148">Chlorophyll</keyword>
<keyword id="KW-0150">Chloroplast</keyword>
<keyword id="KW-0157">Chromophore</keyword>
<keyword id="KW-0464">Manganese</keyword>
<keyword id="KW-0472">Membrane</keyword>
<keyword id="KW-0479">Metal-binding</keyword>
<keyword id="KW-0597">Phosphoprotein</keyword>
<keyword id="KW-0602">Photosynthesis</keyword>
<keyword id="KW-0604">Photosystem II</keyword>
<keyword id="KW-0934">Plastid</keyword>
<keyword id="KW-0793">Thylakoid</keyword>
<keyword id="KW-0812">Transmembrane</keyword>
<keyword id="KW-1133">Transmembrane helix</keyword>
<geneLocation type="chloroplast"/>
<protein>
    <recommendedName>
        <fullName evidence="1">Photosystem II CP43 reaction center protein</fullName>
    </recommendedName>
    <alternativeName>
        <fullName evidence="1">PSII 43 kDa protein</fullName>
    </alternativeName>
    <alternativeName>
        <fullName evidence="1">Protein CP-43</fullName>
    </alternativeName>
</protein>
<evidence type="ECO:0000255" key="1">
    <source>
        <dbReference type="HAMAP-Rule" id="MF_01496"/>
    </source>
</evidence>
<feature type="propeptide" id="PRO_0000431179" evidence="1">
    <location>
        <begin position="1"/>
        <end position="14"/>
    </location>
</feature>
<feature type="chain" id="PRO_0000361446" description="Photosystem II CP43 reaction center protein" evidence="1">
    <location>
        <begin position="15"/>
        <end position="473"/>
    </location>
</feature>
<feature type="transmembrane region" description="Helical" evidence="1">
    <location>
        <begin position="69"/>
        <end position="93"/>
    </location>
</feature>
<feature type="transmembrane region" description="Helical" evidence="1">
    <location>
        <begin position="134"/>
        <end position="155"/>
    </location>
</feature>
<feature type="transmembrane region" description="Helical" evidence="1">
    <location>
        <begin position="178"/>
        <end position="200"/>
    </location>
</feature>
<feature type="transmembrane region" description="Helical" evidence="1">
    <location>
        <begin position="255"/>
        <end position="275"/>
    </location>
</feature>
<feature type="transmembrane region" description="Helical" evidence="1">
    <location>
        <begin position="291"/>
        <end position="312"/>
    </location>
</feature>
<feature type="transmembrane region" description="Helical" evidence="1">
    <location>
        <begin position="447"/>
        <end position="471"/>
    </location>
</feature>
<feature type="binding site" evidence="1">
    <location>
        <position position="367"/>
    </location>
    <ligand>
        <name>[CaMn4O5] cluster</name>
        <dbReference type="ChEBI" id="CHEBI:189552"/>
    </ligand>
</feature>
<feature type="modified residue" description="N-acetylthreonine" evidence="1">
    <location>
        <position position="15"/>
    </location>
</feature>
<feature type="modified residue" description="Phosphothreonine" evidence="1">
    <location>
        <position position="15"/>
    </location>
</feature>